<sequence length="537" mass="60886">MTSNTLHYTVEKSSILGPEWQSLYSTAEPVDFDKSHFEQAMLNVIRQPNVNSTVILRADMLIDNEYDLESGSCVKSEKKDIALGSDEGILKVNIDDLAPRSVPIALADVTTKFQFVRRIVPRNPFKDAIINQTCLVMNSNSDASTSLVIYIPHFDNAELCPFYIPQVAAVGILLHDHQLSVHYIPFAGQKELLFDPKQRVVRTAFRLLQTAYKHSKGVKDGYAKRVMHDVVVDKVLFQDQYIHLKKKYSKFLVDNWAESTDPKKHVFEDIAIAAFLIELWKKIYGAENTTNKMQFRDLGCGNGVLCYILIQEGFKGLGIDARQRKSWSIYPAEVKRCLKEQVIIPSVLLRPHPTMKLHAPHLQHNGRFFPMQLVSPQLIAPATVMYSSADLLQSPQVNIAEFPPDTFIIGNHSDELTCWIPLLGYPFMVIPCCSHNLSGNRIRYAVRDVERAKKLGNSTYQGLVDRVEYLADRVGWKTEKEMLRIPSTRNAAIIGYKNDKLNEFPTDEIYSILMEEGGADGWVANTMNLMKSNPRGH</sequence>
<name>TRM44_KLULA</name>
<feature type="chain" id="PRO_0000249907" description="tRNA (uracil-O(2)-)-methyltransferase">
    <location>
        <begin position="1"/>
        <end position="537"/>
    </location>
</feature>
<accession>Q6CR42</accession>
<dbReference type="EC" id="2.1.1.211"/>
<dbReference type="EMBL" id="CR382124">
    <property type="protein sequence ID" value="CAH00693.1"/>
    <property type="molecule type" value="Genomic_DNA"/>
</dbReference>
<dbReference type="RefSeq" id="XP_453597.1">
    <property type="nucleotide sequence ID" value="XM_453597.1"/>
</dbReference>
<dbReference type="FunCoup" id="Q6CR42">
    <property type="interactions" value="109"/>
</dbReference>
<dbReference type="STRING" id="284590.Q6CR42"/>
<dbReference type="PaxDb" id="284590-Q6CR42"/>
<dbReference type="KEGG" id="kla:KLLA0_D12012g"/>
<dbReference type="eggNOG" id="KOG3790">
    <property type="taxonomic scope" value="Eukaryota"/>
</dbReference>
<dbReference type="HOGENOM" id="CLU_018580_2_0_1"/>
<dbReference type="InParanoid" id="Q6CR42"/>
<dbReference type="OMA" id="IREPNIN"/>
<dbReference type="Proteomes" id="UP000000598">
    <property type="component" value="Chromosome D"/>
</dbReference>
<dbReference type="GO" id="GO:0005737">
    <property type="term" value="C:cytoplasm"/>
    <property type="evidence" value="ECO:0007669"/>
    <property type="project" value="UniProtKB-SubCell"/>
</dbReference>
<dbReference type="GO" id="GO:0141101">
    <property type="term" value="F:tRNA(Ser) (uridine(44)-2'-O-)-methyltransferase activity"/>
    <property type="evidence" value="ECO:0007669"/>
    <property type="project" value="UniProtKB-EC"/>
</dbReference>
<dbReference type="GO" id="GO:0030488">
    <property type="term" value="P:tRNA methylation"/>
    <property type="evidence" value="ECO:0007669"/>
    <property type="project" value="TreeGrafter"/>
</dbReference>
<dbReference type="InterPro" id="IPR011671">
    <property type="entry name" value="tRNA_uracil_MeTrfase"/>
</dbReference>
<dbReference type="PANTHER" id="PTHR21210">
    <property type="entry name" value="TRNA (URACIL-O(2)-)-METHYLTRANSFERASE-RELATED"/>
    <property type="match status" value="1"/>
</dbReference>
<dbReference type="PANTHER" id="PTHR21210:SF0">
    <property type="entry name" value="TRNA (URACIL-O(2)-)-METHYLTRANSFERASE-RELATED"/>
    <property type="match status" value="1"/>
</dbReference>
<dbReference type="Pfam" id="PF07757">
    <property type="entry name" value="AdoMet_MTase"/>
    <property type="match status" value="1"/>
</dbReference>
<keyword id="KW-0963">Cytoplasm</keyword>
<keyword id="KW-0489">Methyltransferase</keyword>
<keyword id="KW-1185">Reference proteome</keyword>
<keyword id="KW-0949">S-adenosyl-L-methionine</keyword>
<keyword id="KW-0808">Transferase</keyword>
<keyword id="KW-0819">tRNA processing</keyword>
<organism>
    <name type="scientific">Kluyveromyces lactis (strain ATCC 8585 / CBS 2359 / DSM 70799 / NBRC 1267 / NRRL Y-1140 / WM37)</name>
    <name type="common">Yeast</name>
    <name type="synonym">Candida sphaerica</name>
    <dbReference type="NCBI Taxonomy" id="284590"/>
    <lineage>
        <taxon>Eukaryota</taxon>
        <taxon>Fungi</taxon>
        <taxon>Dikarya</taxon>
        <taxon>Ascomycota</taxon>
        <taxon>Saccharomycotina</taxon>
        <taxon>Saccharomycetes</taxon>
        <taxon>Saccharomycetales</taxon>
        <taxon>Saccharomycetaceae</taxon>
        <taxon>Kluyveromyces</taxon>
    </lineage>
</organism>
<gene>
    <name type="primary">TRM44</name>
    <name type="ordered locus">KLLA0D12012g</name>
</gene>
<protein>
    <recommendedName>
        <fullName>tRNA (uracil-O(2)-)-methyltransferase</fullName>
        <ecNumber>2.1.1.211</ecNumber>
    </recommendedName>
</protein>
<comment type="function">
    <text evidence="1">Probable adenosyl-L-methionine (AdoMet)-dependent tRNA (uracil-O(2)-)-methyltransferase.</text>
</comment>
<comment type="catalytic activity">
    <reaction>
        <text>uridine(44) in tRNA(Ser) + S-adenosyl-L-methionine = 2'-O-methyluridine(44) in tRNA(Ser) + S-adenosyl-L-homocysteine + H(+)</text>
        <dbReference type="Rhea" id="RHEA:43100"/>
        <dbReference type="Rhea" id="RHEA-COMP:10339"/>
        <dbReference type="Rhea" id="RHEA-COMP:10340"/>
        <dbReference type="ChEBI" id="CHEBI:15378"/>
        <dbReference type="ChEBI" id="CHEBI:57856"/>
        <dbReference type="ChEBI" id="CHEBI:59789"/>
        <dbReference type="ChEBI" id="CHEBI:65315"/>
        <dbReference type="ChEBI" id="CHEBI:74478"/>
        <dbReference type="EC" id="2.1.1.211"/>
    </reaction>
</comment>
<comment type="subcellular location">
    <subcellularLocation>
        <location evidence="1">Cytoplasm</location>
    </subcellularLocation>
</comment>
<comment type="similarity">
    <text evidence="2">Belongs to the TRM44 family.</text>
</comment>
<evidence type="ECO:0000250" key="1"/>
<evidence type="ECO:0000305" key="2"/>
<reference key="1">
    <citation type="journal article" date="2004" name="Nature">
        <title>Genome evolution in yeasts.</title>
        <authorList>
            <person name="Dujon B."/>
            <person name="Sherman D."/>
            <person name="Fischer G."/>
            <person name="Durrens P."/>
            <person name="Casaregola S."/>
            <person name="Lafontaine I."/>
            <person name="de Montigny J."/>
            <person name="Marck C."/>
            <person name="Neuveglise C."/>
            <person name="Talla E."/>
            <person name="Goffard N."/>
            <person name="Frangeul L."/>
            <person name="Aigle M."/>
            <person name="Anthouard V."/>
            <person name="Babour A."/>
            <person name="Barbe V."/>
            <person name="Barnay S."/>
            <person name="Blanchin S."/>
            <person name="Beckerich J.-M."/>
            <person name="Beyne E."/>
            <person name="Bleykasten C."/>
            <person name="Boisrame A."/>
            <person name="Boyer J."/>
            <person name="Cattolico L."/>
            <person name="Confanioleri F."/>
            <person name="de Daruvar A."/>
            <person name="Despons L."/>
            <person name="Fabre E."/>
            <person name="Fairhead C."/>
            <person name="Ferry-Dumazet H."/>
            <person name="Groppi A."/>
            <person name="Hantraye F."/>
            <person name="Hennequin C."/>
            <person name="Jauniaux N."/>
            <person name="Joyet P."/>
            <person name="Kachouri R."/>
            <person name="Kerrest A."/>
            <person name="Koszul R."/>
            <person name="Lemaire M."/>
            <person name="Lesur I."/>
            <person name="Ma L."/>
            <person name="Muller H."/>
            <person name="Nicaud J.-M."/>
            <person name="Nikolski M."/>
            <person name="Oztas S."/>
            <person name="Ozier-Kalogeropoulos O."/>
            <person name="Pellenz S."/>
            <person name="Potier S."/>
            <person name="Richard G.-F."/>
            <person name="Straub M.-L."/>
            <person name="Suleau A."/>
            <person name="Swennen D."/>
            <person name="Tekaia F."/>
            <person name="Wesolowski-Louvel M."/>
            <person name="Westhof E."/>
            <person name="Wirth B."/>
            <person name="Zeniou-Meyer M."/>
            <person name="Zivanovic Y."/>
            <person name="Bolotin-Fukuhara M."/>
            <person name="Thierry A."/>
            <person name="Bouchier C."/>
            <person name="Caudron B."/>
            <person name="Scarpelli C."/>
            <person name="Gaillardin C."/>
            <person name="Weissenbach J."/>
            <person name="Wincker P."/>
            <person name="Souciet J.-L."/>
        </authorList>
    </citation>
    <scope>NUCLEOTIDE SEQUENCE [LARGE SCALE GENOMIC DNA]</scope>
    <source>
        <strain>ATCC 8585 / CBS 2359 / DSM 70799 / NBRC 1267 / NRRL Y-1140 / WM37</strain>
    </source>
</reference>
<proteinExistence type="inferred from homology"/>